<accession>Q9LJZ8</accession>
<proteinExistence type="predicted"/>
<reference key="1">
    <citation type="journal article" date="2000" name="DNA Res.">
        <title>Structural analysis of Arabidopsis thaliana chromosome 3. II. Sequence features of the 4,251,695 bp regions covered by 90 P1, TAC and BAC clones.</title>
        <authorList>
            <person name="Kaneko T."/>
            <person name="Katoh T."/>
            <person name="Sato S."/>
            <person name="Nakamura Y."/>
            <person name="Asamizu E."/>
            <person name="Tabata S."/>
        </authorList>
    </citation>
    <scope>NUCLEOTIDE SEQUENCE [LARGE SCALE GENOMIC DNA]</scope>
    <source>
        <strain>cv. Columbia</strain>
    </source>
</reference>
<reference key="2">
    <citation type="journal article" date="2017" name="Plant J.">
        <title>Araport11: a complete reannotation of the Arabidopsis thaliana reference genome.</title>
        <authorList>
            <person name="Cheng C.Y."/>
            <person name="Krishnakumar V."/>
            <person name="Chan A.P."/>
            <person name="Thibaud-Nissen F."/>
            <person name="Schobel S."/>
            <person name="Town C.D."/>
        </authorList>
    </citation>
    <scope>GENOME REANNOTATION</scope>
    <source>
        <strain>cv. Columbia</strain>
    </source>
</reference>
<feature type="chain" id="PRO_0000283437" description="Putative F-box protein At3g20030">
    <location>
        <begin position="1"/>
        <end position="402"/>
    </location>
</feature>
<feature type="domain" description="F-box">
    <location>
        <begin position="1"/>
        <end position="56"/>
    </location>
</feature>
<organism>
    <name type="scientific">Arabidopsis thaliana</name>
    <name type="common">Mouse-ear cress</name>
    <dbReference type="NCBI Taxonomy" id="3702"/>
    <lineage>
        <taxon>Eukaryota</taxon>
        <taxon>Viridiplantae</taxon>
        <taxon>Streptophyta</taxon>
        <taxon>Embryophyta</taxon>
        <taxon>Tracheophyta</taxon>
        <taxon>Spermatophyta</taxon>
        <taxon>Magnoliopsida</taxon>
        <taxon>eudicotyledons</taxon>
        <taxon>Gunneridae</taxon>
        <taxon>Pentapetalae</taxon>
        <taxon>rosids</taxon>
        <taxon>malvids</taxon>
        <taxon>Brassicales</taxon>
        <taxon>Brassicaceae</taxon>
        <taxon>Camelineae</taxon>
        <taxon>Arabidopsis</taxon>
    </lineage>
</organism>
<protein>
    <recommendedName>
        <fullName>Putative F-box protein At3g20030</fullName>
    </recommendedName>
</protein>
<sequence length="402" mass="47025">MTMMSDLSQDLLEEILSRVPRTSLGAVRSTCKRWNTLFKDRILCKAEETRDQFRFIMKKYKLCSMRFDLNGTLNEDGGTEFVDPSIKELGHFFNQVKISKVFQCDGLLLCVTKEDNIRLVVWNPYLGQIRWIESGNTNYRLFDRYAIGYDNNRKHKILRFLEYYNFNMKHRFLEYEIYDFSSNSWRVLDIAPRWEIESYQRGASLKGNTYFIAKEKIEYEEDGEFPEPADNLLCFDFTTESFGQFLPLPFQHYLYDVGALSSLGDEKLAALFQCGDTDLSEVEIWVTTLTETNTVSWNPFLKVDMEPHYGRSFMFDYYGGSFFIDEEKKLAVVFQFDESGMTRYEDATYIIGENGYVKKVRLGEAPANQGGYCFPSVCFSSYVPSLVQINQIVGFKKEREEE</sequence>
<name>FB167_ARATH</name>
<keyword id="KW-1185">Reference proteome</keyword>
<dbReference type="EMBL" id="AP000383">
    <property type="protein sequence ID" value="BAB01860.1"/>
    <property type="molecule type" value="Genomic_DNA"/>
</dbReference>
<dbReference type="EMBL" id="CP002686">
    <property type="protein sequence ID" value="AEE76322.1"/>
    <property type="molecule type" value="Genomic_DNA"/>
</dbReference>
<dbReference type="RefSeq" id="NP_188638.1">
    <property type="nucleotide sequence ID" value="NM_112894.1"/>
</dbReference>
<dbReference type="SMR" id="Q9LJZ8"/>
<dbReference type="PaxDb" id="3702-AT3G20030.1"/>
<dbReference type="EnsemblPlants" id="AT3G20030.1">
    <property type="protein sequence ID" value="AT3G20030.1"/>
    <property type="gene ID" value="AT3G20030"/>
</dbReference>
<dbReference type="GeneID" id="821542"/>
<dbReference type="Gramene" id="AT3G20030.1">
    <property type="protein sequence ID" value="AT3G20030.1"/>
    <property type="gene ID" value="AT3G20030"/>
</dbReference>
<dbReference type="KEGG" id="ath:AT3G20030"/>
<dbReference type="Araport" id="AT3G20030"/>
<dbReference type="TAIR" id="AT3G20030"/>
<dbReference type="HOGENOM" id="CLU_034692_0_0_1"/>
<dbReference type="InParanoid" id="Q9LJZ8"/>
<dbReference type="OMA" id="PVEHYIE"/>
<dbReference type="PhylomeDB" id="Q9LJZ8"/>
<dbReference type="PRO" id="PR:Q9LJZ8"/>
<dbReference type="Proteomes" id="UP000006548">
    <property type="component" value="Chromosome 3"/>
</dbReference>
<dbReference type="ExpressionAtlas" id="Q9LJZ8">
    <property type="expression patterns" value="baseline and differential"/>
</dbReference>
<dbReference type="CDD" id="cd22157">
    <property type="entry name" value="F-box_AtFBW1-like"/>
    <property type="match status" value="1"/>
</dbReference>
<dbReference type="Gene3D" id="1.20.1280.50">
    <property type="match status" value="1"/>
</dbReference>
<dbReference type="InterPro" id="IPR006527">
    <property type="entry name" value="F-box-assoc_dom_typ1"/>
</dbReference>
<dbReference type="InterPro" id="IPR017451">
    <property type="entry name" value="F-box-assoc_interact_dom"/>
</dbReference>
<dbReference type="InterPro" id="IPR036047">
    <property type="entry name" value="F-box-like_dom_sf"/>
</dbReference>
<dbReference type="InterPro" id="IPR001810">
    <property type="entry name" value="F-box_dom"/>
</dbReference>
<dbReference type="InterPro" id="IPR011043">
    <property type="entry name" value="Gal_Oxase/kelch_b-propeller"/>
</dbReference>
<dbReference type="InterPro" id="IPR050796">
    <property type="entry name" value="SCF_F-box_component"/>
</dbReference>
<dbReference type="NCBIfam" id="TIGR01640">
    <property type="entry name" value="F_box_assoc_1"/>
    <property type="match status" value="1"/>
</dbReference>
<dbReference type="PANTHER" id="PTHR31672">
    <property type="entry name" value="BNACNNG10540D PROTEIN"/>
    <property type="match status" value="1"/>
</dbReference>
<dbReference type="PANTHER" id="PTHR31672:SF13">
    <property type="entry name" value="F-BOX PROTEIN CPR30-LIKE"/>
    <property type="match status" value="1"/>
</dbReference>
<dbReference type="Pfam" id="PF00646">
    <property type="entry name" value="F-box"/>
    <property type="match status" value="1"/>
</dbReference>
<dbReference type="Pfam" id="PF07734">
    <property type="entry name" value="FBA_1"/>
    <property type="match status" value="1"/>
</dbReference>
<dbReference type="SMART" id="SM00256">
    <property type="entry name" value="FBOX"/>
    <property type="match status" value="1"/>
</dbReference>
<dbReference type="SUPFAM" id="SSF81383">
    <property type="entry name" value="F-box domain"/>
    <property type="match status" value="1"/>
</dbReference>
<dbReference type="SUPFAM" id="SSF50965">
    <property type="entry name" value="Galactose oxidase, central domain"/>
    <property type="match status" value="1"/>
</dbReference>
<gene>
    <name type="ordered locus">At3g20030</name>
    <name type="ORF">MAL21.3</name>
</gene>